<accession>A9C3D1</accession>
<reference key="1">
    <citation type="submission" date="2007-11" db="EMBL/GenBank/DDBJ databases">
        <title>Complete sequence of Delftia acidovorans DSM 14801 / SPH-1.</title>
        <authorList>
            <person name="Copeland A."/>
            <person name="Lucas S."/>
            <person name="Lapidus A."/>
            <person name="Barry K."/>
            <person name="Glavina del Rio T."/>
            <person name="Dalin E."/>
            <person name="Tice H."/>
            <person name="Pitluck S."/>
            <person name="Lowry S."/>
            <person name="Clum A."/>
            <person name="Schmutz J."/>
            <person name="Larimer F."/>
            <person name="Land M."/>
            <person name="Hauser L."/>
            <person name="Kyrpides N."/>
            <person name="Kim E."/>
            <person name="Schleheck D."/>
            <person name="Richardson P."/>
        </authorList>
    </citation>
    <scope>NUCLEOTIDE SEQUENCE [LARGE SCALE GENOMIC DNA]</scope>
    <source>
        <strain>DSM 14801 / SPH-1</strain>
    </source>
</reference>
<name>RL20_DELAS</name>
<evidence type="ECO:0000255" key="1">
    <source>
        <dbReference type="HAMAP-Rule" id="MF_00382"/>
    </source>
</evidence>
<evidence type="ECO:0000305" key="2"/>
<sequence length="119" mass="13436">MPRVKRGVTARARHKKVLALSKGFRGRRGNVFRIAKQAVMKAGQYAYRDRRAKKRVFRRLWIARINAAARELGLTYSQFANGLKKAAIEIDRKMLADIAVHDKAAFSSIVDQVKAKLAA</sequence>
<proteinExistence type="inferred from homology"/>
<gene>
    <name evidence="1" type="primary">rplT</name>
    <name type="ordered locus">Daci_4613</name>
</gene>
<organism>
    <name type="scientific">Delftia acidovorans (strain DSM 14801 / SPH-1)</name>
    <dbReference type="NCBI Taxonomy" id="398578"/>
    <lineage>
        <taxon>Bacteria</taxon>
        <taxon>Pseudomonadati</taxon>
        <taxon>Pseudomonadota</taxon>
        <taxon>Betaproteobacteria</taxon>
        <taxon>Burkholderiales</taxon>
        <taxon>Comamonadaceae</taxon>
        <taxon>Delftia</taxon>
    </lineage>
</organism>
<dbReference type="EMBL" id="CP000884">
    <property type="protein sequence ID" value="ABX37242.1"/>
    <property type="molecule type" value="Genomic_DNA"/>
</dbReference>
<dbReference type="RefSeq" id="WP_012206412.1">
    <property type="nucleotide sequence ID" value="NC_010002.1"/>
</dbReference>
<dbReference type="SMR" id="A9C3D1"/>
<dbReference type="STRING" id="398578.Daci_4613"/>
<dbReference type="GeneID" id="94691501"/>
<dbReference type="KEGG" id="dac:Daci_4613"/>
<dbReference type="eggNOG" id="COG0292">
    <property type="taxonomic scope" value="Bacteria"/>
</dbReference>
<dbReference type="HOGENOM" id="CLU_123265_0_1_4"/>
<dbReference type="Proteomes" id="UP000000784">
    <property type="component" value="Chromosome"/>
</dbReference>
<dbReference type="GO" id="GO:1990904">
    <property type="term" value="C:ribonucleoprotein complex"/>
    <property type="evidence" value="ECO:0007669"/>
    <property type="project" value="UniProtKB-KW"/>
</dbReference>
<dbReference type="GO" id="GO:0005840">
    <property type="term" value="C:ribosome"/>
    <property type="evidence" value="ECO:0007669"/>
    <property type="project" value="UniProtKB-KW"/>
</dbReference>
<dbReference type="GO" id="GO:0019843">
    <property type="term" value="F:rRNA binding"/>
    <property type="evidence" value="ECO:0007669"/>
    <property type="project" value="UniProtKB-UniRule"/>
</dbReference>
<dbReference type="GO" id="GO:0003735">
    <property type="term" value="F:structural constituent of ribosome"/>
    <property type="evidence" value="ECO:0007669"/>
    <property type="project" value="InterPro"/>
</dbReference>
<dbReference type="GO" id="GO:0000027">
    <property type="term" value="P:ribosomal large subunit assembly"/>
    <property type="evidence" value="ECO:0007669"/>
    <property type="project" value="UniProtKB-UniRule"/>
</dbReference>
<dbReference type="GO" id="GO:0006412">
    <property type="term" value="P:translation"/>
    <property type="evidence" value="ECO:0007669"/>
    <property type="project" value="InterPro"/>
</dbReference>
<dbReference type="CDD" id="cd07026">
    <property type="entry name" value="Ribosomal_L20"/>
    <property type="match status" value="1"/>
</dbReference>
<dbReference type="FunFam" id="1.10.1900.20:FF:000001">
    <property type="entry name" value="50S ribosomal protein L20"/>
    <property type="match status" value="1"/>
</dbReference>
<dbReference type="Gene3D" id="6.10.160.10">
    <property type="match status" value="1"/>
</dbReference>
<dbReference type="Gene3D" id="1.10.1900.20">
    <property type="entry name" value="Ribosomal protein L20"/>
    <property type="match status" value="1"/>
</dbReference>
<dbReference type="HAMAP" id="MF_00382">
    <property type="entry name" value="Ribosomal_bL20"/>
    <property type="match status" value="1"/>
</dbReference>
<dbReference type="InterPro" id="IPR005813">
    <property type="entry name" value="Ribosomal_bL20"/>
</dbReference>
<dbReference type="InterPro" id="IPR049946">
    <property type="entry name" value="RIBOSOMAL_L20_CS"/>
</dbReference>
<dbReference type="InterPro" id="IPR035566">
    <property type="entry name" value="Ribosomal_protein_bL20_C"/>
</dbReference>
<dbReference type="NCBIfam" id="TIGR01032">
    <property type="entry name" value="rplT_bact"/>
    <property type="match status" value="1"/>
</dbReference>
<dbReference type="PANTHER" id="PTHR10986">
    <property type="entry name" value="39S RIBOSOMAL PROTEIN L20"/>
    <property type="match status" value="1"/>
</dbReference>
<dbReference type="Pfam" id="PF00453">
    <property type="entry name" value="Ribosomal_L20"/>
    <property type="match status" value="1"/>
</dbReference>
<dbReference type="PRINTS" id="PR00062">
    <property type="entry name" value="RIBOSOMALL20"/>
</dbReference>
<dbReference type="SUPFAM" id="SSF74731">
    <property type="entry name" value="Ribosomal protein L20"/>
    <property type="match status" value="1"/>
</dbReference>
<dbReference type="PROSITE" id="PS00937">
    <property type="entry name" value="RIBOSOMAL_L20"/>
    <property type="match status" value="1"/>
</dbReference>
<keyword id="KW-1185">Reference proteome</keyword>
<keyword id="KW-0687">Ribonucleoprotein</keyword>
<keyword id="KW-0689">Ribosomal protein</keyword>
<keyword id="KW-0694">RNA-binding</keyword>
<keyword id="KW-0699">rRNA-binding</keyword>
<feature type="chain" id="PRO_1000122304" description="Large ribosomal subunit protein bL20">
    <location>
        <begin position="1"/>
        <end position="119"/>
    </location>
</feature>
<comment type="function">
    <text evidence="1">Binds directly to 23S ribosomal RNA and is necessary for the in vitro assembly process of the 50S ribosomal subunit. It is not involved in the protein synthesizing functions of that subunit.</text>
</comment>
<comment type="similarity">
    <text evidence="1">Belongs to the bacterial ribosomal protein bL20 family.</text>
</comment>
<protein>
    <recommendedName>
        <fullName evidence="1">Large ribosomal subunit protein bL20</fullName>
    </recommendedName>
    <alternativeName>
        <fullName evidence="2">50S ribosomal protein L20</fullName>
    </alternativeName>
</protein>